<dbReference type="EC" id="6.1.1.20" evidence="1"/>
<dbReference type="EMBL" id="CP000609">
    <property type="protein sequence ID" value="ABO34398.1"/>
    <property type="molecule type" value="Genomic_DNA"/>
</dbReference>
<dbReference type="RefSeq" id="WP_011867859.1">
    <property type="nucleotide sequence ID" value="NC_009135.1"/>
</dbReference>
<dbReference type="SMR" id="A4FW27"/>
<dbReference type="STRING" id="402880.MmarC5_0081"/>
<dbReference type="GeneID" id="4928461"/>
<dbReference type="KEGG" id="mmq:MmarC5_0081"/>
<dbReference type="eggNOG" id="arCOG00410">
    <property type="taxonomic scope" value="Archaea"/>
</dbReference>
<dbReference type="HOGENOM" id="CLU_025086_2_2_2"/>
<dbReference type="OrthoDB" id="372178at2157"/>
<dbReference type="Proteomes" id="UP000000253">
    <property type="component" value="Chromosome"/>
</dbReference>
<dbReference type="GO" id="GO:0005737">
    <property type="term" value="C:cytoplasm"/>
    <property type="evidence" value="ECO:0007669"/>
    <property type="project" value="UniProtKB-SubCell"/>
</dbReference>
<dbReference type="GO" id="GO:0005524">
    <property type="term" value="F:ATP binding"/>
    <property type="evidence" value="ECO:0007669"/>
    <property type="project" value="UniProtKB-UniRule"/>
</dbReference>
<dbReference type="GO" id="GO:0000287">
    <property type="term" value="F:magnesium ion binding"/>
    <property type="evidence" value="ECO:0007669"/>
    <property type="project" value="UniProtKB-UniRule"/>
</dbReference>
<dbReference type="GO" id="GO:0004826">
    <property type="term" value="F:phenylalanine-tRNA ligase activity"/>
    <property type="evidence" value="ECO:0007669"/>
    <property type="project" value="UniProtKB-UniRule"/>
</dbReference>
<dbReference type="GO" id="GO:0000049">
    <property type="term" value="F:tRNA binding"/>
    <property type="evidence" value="ECO:0007669"/>
    <property type="project" value="InterPro"/>
</dbReference>
<dbReference type="GO" id="GO:0006432">
    <property type="term" value="P:phenylalanyl-tRNA aminoacylation"/>
    <property type="evidence" value="ECO:0007669"/>
    <property type="project" value="UniProtKB-UniRule"/>
</dbReference>
<dbReference type="CDD" id="cd00496">
    <property type="entry name" value="PheRS_alpha_core"/>
    <property type="match status" value="1"/>
</dbReference>
<dbReference type="FunFam" id="3.30.930.10:FF:000095">
    <property type="entry name" value="Phenylalanine--tRNA ligase alpha subunit"/>
    <property type="match status" value="1"/>
</dbReference>
<dbReference type="Gene3D" id="1.10.10.2320">
    <property type="match status" value="1"/>
</dbReference>
<dbReference type="Gene3D" id="1.10.10.2330">
    <property type="match status" value="1"/>
</dbReference>
<dbReference type="Gene3D" id="3.30.1370.240">
    <property type="match status" value="1"/>
</dbReference>
<dbReference type="Gene3D" id="3.30.930.10">
    <property type="entry name" value="Bira Bifunctional Protein, Domain 2"/>
    <property type="match status" value="1"/>
</dbReference>
<dbReference type="HAMAP" id="MF_00282">
    <property type="entry name" value="Phe_tRNA_synth_alpha2"/>
    <property type="match status" value="1"/>
</dbReference>
<dbReference type="InterPro" id="IPR006195">
    <property type="entry name" value="aa-tRNA-synth_II"/>
</dbReference>
<dbReference type="InterPro" id="IPR045864">
    <property type="entry name" value="aa-tRNA-synth_II/BPL/LPL"/>
</dbReference>
<dbReference type="InterPro" id="IPR004529">
    <property type="entry name" value="Phe-tRNA-synth_IIc_asu"/>
</dbReference>
<dbReference type="InterPro" id="IPR022917">
    <property type="entry name" value="Phe_tRNA_ligase_alpha_bac/arc"/>
</dbReference>
<dbReference type="InterPro" id="IPR002319">
    <property type="entry name" value="Phenylalanyl-tRNA_Synthase"/>
</dbReference>
<dbReference type="NCBIfam" id="TIGR00468">
    <property type="entry name" value="pheS"/>
    <property type="match status" value="1"/>
</dbReference>
<dbReference type="NCBIfam" id="NF003210">
    <property type="entry name" value="PRK04172.1"/>
    <property type="match status" value="1"/>
</dbReference>
<dbReference type="PANTHER" id="PTHR11538:SF40">
    <property type="entry name" value="PHENYLALANINE--TRNA LIGASE ALPHA SUBUNIT"/>
    <property type="match status" value="1"/>
</dbReference>
<dbReference type="PANTHER" id="PTHR11538">
    <property type="entry name" value="PHENYLALANYL-TRNA SYNTHETASE"/>
    <property type="match status" value="1"/>
</dbReference>
<dbReference type="Pfam" id="PF01409">
    <property type="entry name" value="tRNA-synt_2d"/>
    <property type="match status" value="1"/>
</dbReference>
<dbReference type="SUPFAM" id="SSF55681">
    <property type="entry name" value="Class II aaRS and biotin synthetases"/>
    <property type="match status" value="1"/>
</dbReference>
<dbReference type="PROSITE" id="PS50862">
    <property type="entry name" value="AA_TRNA_LIGASE_II"/>
    <property type="match status" value="1"/>
</dbReference>
<gene>
    <name evidence="1" type="primary">pheS</name>
    <name type="ordered locus">MmarC5_0081</name>
</gene>
<evidence type="ECO:0000255" key="1">
    <source>
        <dbReference type="HAMAP-Rule" id="MF_00282"/>
    </source>
</evidence>
<proteinExistence type="inferred from homology"/>
<comment type="catalytic activity">
    <reaction evidence="1">
        <text>tRNA(Phe) + L-phenylalanine + ATP = L-phenylalanyl-tRNA(Phe) + AMP + diphosphate + H(+)</text>
        <dbReference type="Rhea" id="RHEA:19413"/>
        <dbReference type="Rhea" id="RHEA-COMP:9668"/>
        <dbReference type="Rhea" id="RHEA-COMP:9699"/>
        <dbReference type="ChEBI" id="CHEBI:15378"/>
        <dbReference type="ChEBI" id="CHEBI:30616"/>
        <dbReference type="ChEBI" id="CHEBI:33019"/>
        <dbReference type="ChEBI" id="CHEBI:58095"/>
        <dbReference type="ChEBI" id="CHEBI:78442"/>
        <dbReference type="ChEBI" id="CHEBI:78531"/>
        <dbReference type="ChEBI" id="CHEBI:456215"/>
        <dbReference type="EC" id="6.1.1.20"/>
    </reaction>
</comment>
<comment type="cofactor">
    <cofactor evidence="1">
        <name>Mg(2+)</name>
        <dbReference type="ChEBI" id="CHEBI:18420"/>
    </cofactor>
    <text evidence="1">Binds 2 magnesium ions per tetramer.</text>
</comment>
<comment type="subunit">
    <text evidence="1">Tetramer of two alpha and two beta subunits.</text>
</comment>
<comment type="subcellular location">
    <subcellularLocation>
        <location evidence="1">Cytoplasm</location>
    </subcellularLocation>
</comment>
<comment type="similarity">
    <text evidence="1">Belongs to the class-II aminoacyl-tRNA synthetase family. Phe-tRNA synthetase alpha subunit type 2 subfamily.</text>
</comment>
<reference key="1">
    <citation type="submission" date="2007-03" db="EMBL/GenBank/DDBJ databases">
        <title>Complete sequence of chromosome of Methanococcus maripaludis C5.</title>
        <authorList>
            <consortium name="US DOE Joint Genome Institute"/>
            <person name="Copeland A."/>
            <person name="Lucas S."/>
            <person name="Lapidus A."/>
            <person name="Barry K."/>
            <person name="Glavina del Rio T."/>
            <person name="Dalin E."/>
            <person name="Tice H."/>
            <person name="Pitluck S."/>
            <person name="Chertkov O."/>
            <person name="Brettin T."/>
            <person name="Bruce D."/>
            <person name="Han C."/>
            <person name="Detter J.C."/>
            <person name="Schmutz J."/>
            <person name="Larimer F."/>
            <person name="Land M."/>
            <person name="Hauser L."/>
            <person name="Kyrpides N."/>
            <person name="Mikhailova N."/>
            <person name="Sieprawska-Lupa M."/>
            <person name="Whitman W.B."/>
            <person name="Richardson P."/>
        </authorList>
    </citation>
    <scope>NUCLEOTIDE SEQUENCE [LARGE SCALE GENOMIC DNA]</scope>
    <source>
        <strain>C5 / ATCC BAA-1333</strain>
    </source>
</reference>
<organism>
    <name type="scientific">Methanococcus maripaludis (strain C5 / ATCC BAA-1333)</name>
    <dbReference type="NCBI Taxonomy" id="402880"/>
    <lineage>
        <taxon>Archaea</taxon>
        <taxon>Methanobacteriati</taxon>
        <taxon>Methanobacteriota</taxon>
        <taxon>Methanomada group</taxon>
        <taxon>Methanococci</taxon>
        <taxon>Methanococcales</taxon>
        <taxon>Methanococcaceae</taxon>
        <taxon>Methanococcus</taxon>
    </lineage>
</organism>
<accession>A4FW27</accession>
<name>SYFA_METM5</name>
<keyword id="KW-0030">Aminoacyl-tRNA synthetase</keyword>
<keyword id="KW-0067">ATP-binding</keyword>
<keyword id="KW-0963">Cytoplasm</keyword>
<keyword id="KW-0436">Ligase</keyword>
<keyword id="KW-0460">Magnesium</keyword>
<keyword id="KW-0479">Metal-binding</keyword>
<keyword id="KW-0547">Nucleotide-binding</keyword>
<keyword id="KW-0648">Protein biosynthesis</keyword>
<sequence length="501" mass="58007">MELHNDEKRLLKAFQESNEKIMNLEELSKYIEKEKVMRAAFWLSGRDFLEIIENKTKICELTELGNQSLDLGIPERKVANYIKENNLESIPIKDLSKILEKDETGAALGNLKKKGLVAIDKGNIVFKDLDYVDIEEEVLKKASEDFNLSNYSEDEVKIIENLKKRGFLKINEVVDRSFELKNAGIDFIKKPIEIKEEITQLTREMIVSGKWNDYFIRPYDAKIPTEELYPAKAHPMSKIIQEVNEVLISMGFKEVKSQIVQTEFWNFDTLFEPQDHPARDMQDTFFVKYPNTGTVPKDLLEKVKGIHECGTIGDEKISKGWCYNFDENVSERTVLRTHTTVSSIKYLASLSECERENAQKVFCIDRVFRNEAIDYKHLPEFYQCEGIVMAEDVNFDNLVGILKEFLQKLGFEKVRIRPAYFPFTEPSLEAEVYMEGKGWLELLGAGIFRPEVLEPFGIKKPVLAWGIGLSRLAMLRLGLTDIRELHKNDMQWLKKTVISEE</sequence>
<protein>
    <recommendedName>
        <fullName evidence="1">Phenylalanine--tRNA ligase alpha subunit</fullName>
        <ecNumber evidence="1">6.1.1.20</ecNumber>
    </recommendedName>
    <alternativeName>
        <fullName evidence="1">Phenylalanyl-tRNA synthetase alpha subunit</fullName>
        <shortName evidence="1">PheRS</shortName>
    </alternativeName>
</protein>
<feature type="chain" id="PRO_1000007662" description="Phenylalanine--tRNA ligase alpha subunit">
    <location>
        <begin position="1"/>
        <end position="501"/>
    </location>
</feature>
<feature type="binding site" evidence="1">
    <location>
        <position position="340"/>
    </location>
    <ligand>
        <name>L-phenylalanine</name>
        <dbReference type="ChEBI" id="CHEBI:58095"/>
    </ligand>
</feature>
<feature type="binding site" evidence="1">
    <location>
        <position position="423"/>
    </location>
    <ligand>
        <name>L-phenylalanine</name>
        <dbReference type="ChEBI" id="CHEBI:58095"/>
    </ligand>
</feature>
<feature type="binding site" evidence="1">
    <location>
        <position position="425"/>
    </location>
    <ligand>
        <name>Mg(2+)</name>
        <dbReference type="ChEBI" id="CHEBI:18420"/>
        <note>shared with beta subunit</note>
    </ligand>
</feature>
<feature type="binding site" evidence="1">
    <location>
        <position position="448"/>
    </location>
    <ligand>
        <name>L-phenylalanine</name>
        <dbReference type="ChEBI" id="CHEBI:58095"/>
    </ligand>
</feature>